<comment type="function">
    <text evidence="1">Forms part of the ribosomal stalk, playing a central role in the interaction of the ribosome with GTP-bound translation factors.</text>
</comment>
<comment type="subunit">
    <text evidence="1">Part of the ribosomal stalk of the 50S ribosomal subunit. The N-terminus interacts with L11 and the large rRNA to form the base of the stalk. The C-terminus forms an elongated spine to which L12 dimers bind in a sequential fashion forming a multimeric L10(L12)X complex.</text>
</comment>
<comment type="similarity">
    <text evidence="1">Belongs to the universal ribosomal protein uL10 family.</text>
</comment>
<reference key="1">
    <citation type="journal article" date="2009" name="J. Bacteriol.">
        <title>Complete genome sequence of Macrococcus caseolyticus strain JCSCS5402, reflecting the ancestral genome of the human-pathogenic staphylococci.</title>
        <authorList>
            <person name="Baba T."/>
            <person name="Kuwahara-Arai K."/>
            <person name="Uchiyama I."/>
            <person name="Takeuchi F."/>
            <person name="Ito T."/>
            <person name="Hiramatsu K."/>
        </authorList>
    </citation>
    <scope>NUCLEOTIDE SEQUENCE [LARGE SCALE GENOMIC DNA]</scope>
    <source>
        <strain>JCSC5402</strain>
    </source>
</reference>
<gene>
    <name evidence="1" type="primary">rplJ</name>
    <name type="ordered locus">MCCL_1869</name>
</gene>
<dbReference type="EMBL" id="AP009484">
    <property type="protein sequence ID" value="BAH18576.1"/>
    <property type="molecule type" value="Genomic_DNA"/>
</dbReference>
<dbReference type="RefSeq" id="WP_015912368.1">
    <property type="nucleotide sequence ID" value="NC_011999.1"/>
</dbReference>
<dbReference type="SMR" id="B9E8Q8"/>
<dbReference type="STRING" id="458233.MCCL_1869"/>
<dbReference type="GeneID" id="35296488"/>
<dbReference type="GeneID" id="61130255"/>
<dbReference type="KEGG" id="mcl:MCCL_1869"/>
<dbReference type="eggNOG" id="COG0244">
    <property type="taxonomic scope" value="Bacteria"/>
</dbReference>
<dbReference type="HOGENOM" id="CLU_092227_2_0_9"/>
<dbReference type="OrthoDB" id="9808307at2"/>
<dbReference type="Proteomes" id="UP000001383">
    <property type="component" value="Chromosome"/>
</dbReference>
<dbReference type="GO" id="GO:1990904">
    <property type="term" value="C:ribonucleoprotein complex"/>
    <property type="evidence" value="ECO:0007669"/>
    <property type="project" value="UniProtKB-KW"/>
</dbReference>
<dbReference type="GO" id="GO:0005840">
    <property type="term" value="C:ribosome"/>
    <property type="evidence" value="ECO:0007669"/>
    <property type="project" value="UniProtKB-KW"/>
</dbReference>
<dbReference type="GO" id="GO:0070180">
    <property type="term" value="F:large ribosomal subunit rRNA binding"/>
    <property type="evidence" value="ECO:0007669"/>
    <property type="project" value="UniProtKB-UniRule"/>
</dbReference>
<dbReference type="GO" id="GO:0006412">
    <property type="term" value="P:translation"/>
    <property type="evidence" value="ECO:0007669"/>
    <property type="project" value="UniProtKB-UniRule"/>
</dbReference>
<dbReference type="CDD" id="cd05797">
    <property type="entry name" value="Ribosomal_L10"/>
    <property type="match status" value="1"/>
</dbReference>
<dbReference type="FunFam" id="3.30.70.1730:FF:000001">
    <property type="entry name" value="50S ribosomal protein L10"/>
    <property type="match status" value="1"/>
</dbReference>
<dbReference type="Gene3D" id="3.30.70.1730">
    <property type="match status" value="1"/>
</dbReference>
<dbReference type="Gene3D" id="6.10.250.290">
    <property type="match status" value="1"/>
</dbReference>
<dbReference type="HAMAP" id="MF_00362">
    <property type="entry name" value="Ribosomal_uL10"/>
    <property type="match status" value="1"/>
</dbReference>
<dbReference type="InterPro" id="IPR001790">
    <property type="entry name" value="Ribosomal_uL10"/>
</dbReference>
<dbReference type="InterPro" id="IPR043141">
    <property type="entry name" value="Ribosomal_uL10-like_sf"/>
</dbReference>
<dbReference type="InterPro" id="IPR022973">
    <property type="entry name" value="Ribosomal_uL10_bac"/>
</dbReference>
<dbReference type="InterPro" id="IPR047865">
    <property type="entry name" value="Ribosomal_uL10_bac_type"/>
</dbReference>
<dbReference type="NCBIfam" id="NF000955">
    <property type="entry name" value="PRK00099.1-1"/>
    <property type="match status" value="1"/>
</dbReference>
<dbReference type="PANTHER" id="PTHR11560">
    <property type="entry name" value="39S RIBOSOMAL PROTEIN L10, MITOCHONDRIAL"/>
    <property type="match status" value="1"/>
</dbReference>
<dbReference type="Pfam" id="PF00466">
    <property type="entry name" value="Ribosomal_L10"/>
    <property type="match status" value="1"/>
</dbReference>
<dbReference type="SUPFAM" id="SSF160369">
    <property type="entry name" value="Ribosomal protein L10-like"/>
    <property type="match status" value="1"/>
</dbReference>
<accession>B9E8Q8</accession>
<protein>
    <recommendedName>
        <fullName evidence="1">Large ribosomal subunit protein uL10</fullName>
    </recommendedName>
    <alternativeName>
        <fullName evidence="2">50S ribosomal protein L10</fullName>
    </alternativeName>
</protein>
<feature type="chain" id="PRO_1000195553" description="Large ribosomal subunit protein uL10">
    <location>
        <begin position="1"/>
        <end position="172"/>
    </location>
</feature>
<organism>
    <name type="scientific">Macrococcus caseolyticus (strain JCSC5402)</name>
    <name type="common">Macrococcoides caseolyticum</name>
    <dbReference type="NCBI Taxonomy" id="458233"/>
    <lineage>
        <taxon>Bacteria</taxon>
        <taxon>Bacillati</taxon>
        <taxon>Bacillota</taxon>
        <taxon>Bacilli</taxon>
        <taxon>Bacillales</taxon>
        <taxon>Staphylococcaceae</taxon>
        <taxon>Macrococcoides</taxon>
    </lineage>
</organism>
<sequence>MSTKAIEIKQQKADVITEQLKNSVSTIIVDYRGLTVAQVTELRKQLREAGVEFKVYKNTLVRRSAAAAGIEGIDEFLTGPNAIAFSTEEVVAPAKIIADFAKENEALEIKAGIIEGTVTSAEDVKAIASLPSKEGLISMVLSVLQAPIRNFAYAVKAVGEQQGGEETAAEEA</sequence>
<evidence type="ECO:0000255" key="1">
    <source>
        <dbReference type="HAMAP-Rule" id="MF_00362"/>
    </source>
</evidence>
<evidence type="ECO:0000305" key="2"/>
<keyword id="KW-1185">Reference proteome</keyword>
<keyword id="KW-0687">Ribonucleoprotein</keyword>
<keyword id="KW-0689">Ribosomal protein</keyword>
<keyword id="KW-0694">RNA-binding</keyword>
<keyword id="KW-0699">rRNA-binding</keyword>
<name>RL10_MACCJ</name>
<proteinExistence type="inferred from homology"/>